<dbReference type="EC" id="7.1.2.2" evidence="1"/>
<dbReference type="EMBL" id="CP000611">
    <property type="protein sequence ID" value="ABQ73059.1"/>
    <property type="molecule type" value="Genomic_DNA"/>
</dbReference>
<dbReference type="RefSeq" id="WP_003406701.1">
    <property type="nucleotide sequence ID" value="NZ_CP016972.1"/>
</dbReference>
<dbReference type="SMR" id="A5U209"/>
<dbReference type="GeneID" id="45425284"/>
<dbReference type="KEGG" id="mra:MRA_1318"/>
<dbReference type="eggNOG" id="COG0055">
    <property type="taxonomic scope" value="Bacteria"/>
</dbReference>
<dbReference type="HOGENOM" id="CLU_022398_0_2_11"/>
<dbReference type="Proteomes" id="UP000001988">
    <property type="component" value="Chromosome"/>
</dbReference>
<dbReference type="GO" id="GO:0005886">
    <property type="term" value="C:plasma membrane"/>
    <property type="evidence" value="ECO:0007669"/>
    <property type="project" value="UniProtKB-SubCell"/>
</dbReference>
<dbReference type="GO" id="GO:0045259">
    <property type="term" value="C:proton-transporting ATP synthase complex"/>
    <property type="evidence" value="ECO:0007669"/>
    <property type="project" value="UniProtKB-KW"/>
</dbReference>
<dbReference type="GO" id="GO:0005524">
    <property type="term" value="F:ATP binding"/>
    <property type="evidence" value="ECO:0007669"/>
    <property type="project" value="UniProtKB-UniRule"/>
</dbReference>
<dbReference type="GO" id="GO:0016887">
    <property type="term" value="F:ATP hydrolysis activity"/>
    <property type="evidence" value="ECO:0007669"/>
    <property type="project" value="InterPro"/>
</dbReference>
<dbReference type="GO" id="GO:0046933">
    <property type="term" value="F:proton-transporting ATP synthase activity, rotational mechanism"/>
    <property type="evidence" value="ECO:0007669"/>
    <property type="project" value="UniProtKB-UniRule"/>
</dbReference>
<dbReference type="CDD" id="cd18110">
    <property type="entry name" value="ATP-synt_F1_beta_C"/>
    <property type="match status" value="1"/>
</dbReference>
<dbReference type="CDD" id="cd18115">
    <property type="entry name" value="ATP-synt_F1_beta_N"/>
    <property type="match status" value="1"/>
</dbReference>
<dbReference type="CDD" id="cd01133">
    <property type="entry name" value="F1-ATPase_beta_CD"/>
    <property type="match status" value="1"/>
</dbReference>
<dbReference type="FunFam" id="1.10.1140.10:FF:000001">
    <property type="entry name" value="ATP synthase subunit beta"/>
    <property type="match status" value="1"/>
</dbReference>
<dbReference type="FunFam" id="2.40.10.170:FF:000005">
    <property type="entry name" value="ATP synthase subunit beta"/>
    <property type="match status" value="1"/>
</dbReference>
<dbReference type="FunFam" id="3.40.50.300:FF:000004">
    <property type="entry name" value="ATP synthase subunit beta"/>
    <property type="match status" value="1"/>
</dbReference>
<dbReference type="Gene3D" id="2.40.10.170">
    <property type="match status" value="1"/>
</dbReference>
<dbReference type="Gene3D" id="1.10.1140.10">
    <property type="entry name" value="Bovine Mitochondrial F1-atpase, Atp Synthase Beta Chain, Chain D, domain 3"/>
    <property type="match status" value="1"/>
</dbReference>
<dbReference type="Gene3D" id="3.40.50.300">
    <property type="entry name" value="P-loop containing nucleotide triphosphate hydrolases"/>
    <property type="match status" value="1"/>
</dbReference>
<dbReference type="HAMAP" id="MF_01347">
    <property type="entry name" value="ATP_synth_beta_bact"/>
    <property type="match status" value="1"/>
</dbReference>
<dbReference type="InterPro" id="IPR003593">
    <property type="entry name" value="AAA+_ATPase"/>
</dbReference>
<dbReference type="InterPro" id="IPR055190">
    <property type="entry name" value="ATP-synt_VA_C"/>
</dbReference>
<dbReference type="InterPro" id="IPR005722">
    <property type="entry name" value="ATP_synth_F1_bsu"/>
</dbReference>
<dbReference type="InterPro" id="IPR020003">
    <property type="entry name" value="ATPase_a/bsu_AS"/>
</dbReference>
<dbReference type="InterPro" id="IPR050053">
    <property type="entry name" value="ATPase_alpha/beta_chains"/>
</dbReference>
<dbReference type="InterPro" id="IPR004100">
    <property type="entry name" value="ATPase_F1/V1/A1_a/bsu_N"/>
</dbReference>
<dbReference type="InterPro" id="IPR036121">
    <property type="entry name" value="ATPase_F1/V1/A1_a/bsu_N_sf"/>
</dbReference>
<dbReference type="InterPro" id="IPR000194">
    <property type="entry name" value="ATPase_F1/V1/A1_a/bsu_nucl-bd"/>
</dbReference>
<dbReference type="InterPro" id="IPR024034">
    <property type="entry name" value="ATPase_F1/V1_b/a_C"/>
</dbReference>
<dbReference type="InterPro" id="IPR027417">
    <property type="entry name" value="P-loop_NTPase"/>
</dbReference>
<dbReference type="NCBIfam" id="TIGR01039">
    <property type="entry name" value="atpD"/>
    <property type="match status" value="1"/>
</dbReference>
<dbReference type="PANTHER" id="PTHR15184">
    <property type="entry name" value="ATP SYNTHASE"/>
    <property type="match status" value="1"/>
</dbReference>
<dbReference type="PANTHER" id="PTHR15184:SF71">
    <property type="entry name" value="ATP SYNTHASE SUBUNIT BETA, MITOCHONDRIAL"/>
    <property type="match status" value="1"/>
</dbReference>
<dbReference type="Pfam" id="PF00006">
    <property type="entry name" value="ATP-synt_ab"/>
    <property type="match status" value="1"/>
</dbReference>
<dbReference type="Pfam" id="PF02874">
    <property type="entry name" value="ATP-synt_ab_N"/>
    <property type="match status" value="1"/>
</dbReference>
<dbReference type="Pfam" id="PF22919">
    <property type="entry name" value="ATP-synt_VA_C"/>
    <property type="match status" value="1"/>
</dbReference>
<dbReference type="SMART" id="SM00382">
    <property type="entry name" value="AAA"/>
    <property type="match status" value="1"/>
</dbReference>
<dbReference type="SUPFAM" id="SSF47917">
    <property type="entry name" value="C-terminal domain of alpha and beta subunits of F1 ATP synthase"/>
    <property type="match status" value="1"/>
</dbReference>
<dbReference type="SUPFAM" id="SSF50615">
    <property type="entry name" value="N-terminal domain of alpha and beta subunits of F1 ATP synthase"/>
    <property type="match status" value="1"/>
</dbReference>
<dbReference type="SUPFAM" id="SSF52540">
    <property type="entry name" value="P-loop containing nucleoside triphosphate hydrolases"/>
    <property type="match status" value="1"/>
</dbReference>
<dbReference type="PROSITE" id="PS00152">
    <property type="entry name" value="ATPASE_ALPHA_BETA"/>
    <property type="match status" value="1"/>
</dbReference>
<accession>A5U209</accession>
<comment type="function">
    <text evidence="1">Produces ATP from ADP in the presence of a proton gradient across the membrane. The catalytic sites are hosted primarily by the beta subunits.</text>
</comment>
<comment type="catalytic activity">
    <reaction evidence="1">
        <text>ATP + H2O + 4 H(+)(in) = ADP + phosphate + 5 H(+)(out)</text>
        <dbReference type="Rhea" id="RHEA:57720"/>
        <dbReference type="ChEBI" id="CHEBI:15377"/>
        <dbReference type="ChEBI" id="CHEBI:15378"/>
        <dbReference type="ChEBI" id="CHEBI:30616"/>
        <dbReference type="ChEBI" id="CHEBI:43474"/>
        <dbReference type="ChEBI" id="CHEBI:456216"/>
        <dbReference type="EC" id="7.1.2.2"/>
    </reaction>
</comment>
<comment type="subunit">
    <text evidence="1">F-type ATPases have 2 components, CF(1) - the catalytic core - and CF(0) - the membrane proton channel. CF(1) has five subunits: alpha(3), beta(3), gamma(1), delta(1), epsilon(1). CF(0) has three main subunits: a(1), b(2) and c(9-12). The alpha and beta chains form an alternating ring which encloses part of the gamma chain. CF(1) is attached to CF(0) by a central stalk formed by the gamma and epsilon chains, while a peripheral stalk is formed by the delta and b chains.</text>
</comment>
<comment type="subcellular location">
    <subcellularLocation>
        <location evidence="1">Cell membrane</location>
        <topology evidence="1">Peripheral membrane protein</topology>
    </subcellularLocation>
</comment>
<comment type="similarity">
    <text evidence="1">Belongs to the ATPase alpha/beta chains family.</text>
</comment>
<organism>
    <name type="scientific">Mycobacterium tuberculosis (strain ATCC 25177 / H37Ra)</name>
    <dbReference type="NCBI Taxonomy" id="419947"/>
    <lineage>
        <taxon>Bacteria</taxon>
        <taxon>Bacillati</taxon>
        <taxon>Actinomycetota</taxon>
        <taxon>Actinomycetes</taxon>
        <taxon>Mycobacteriales</taxon>
        <taxon>Mycobacteriaceae</taxon>
        <taxon>Mycobacterium</taxon>
        <taxon>Mycobacterium tuberculosis complex</taxon>
    </lineage>
</organism>
<reference key="1">
    <citation type="journal article" date="2008" name="PLoS ONE">
        <title>Genetic basis of virulence attenuation revealed by comparative genomic analysis of Mycobacterium tuberculosis strain H37Ra versus H37Rv.</title>
        <authorList>
            <person name="Zheng H."/>
            <person name="Lu L."/>
            <person name="Wang B."/>
            <person name="Pu S."/>
            <person name="Zhang X."/>
            <person name="Zhu G."/>
            <person name="Shi W."/>
            <person name="Zhang L."/>
            <person name="Wang H."/>
            <person name="Wang S."/>
            <person name="Zhao G."/>
            <person name="Zhang Y."/>
        </authorList>
    </citation>
    <scope>NUCLEOTIDE SEQUENCE [LARGE SCALE GENOMIC DNA]</scope>
    <source>
        <strain>ATCC 25177 / H37Ra</strain>
    </source>
</reference>
<sequence>MTTTAEKTDRPGKPGSSDTSGRVVRVTGPVVDVEFPRGSIPELFNALHAEITFESLAKTLTLEVAQHLGDNLVRTISLQPTDGLVRGVEVIDTGRSISVPVGEGVKGHVFNALGDCLDEPGYGEKFEHWSIHRKPPAFEELEPRTEMLETGLKVVDLLTPYVRGGKIALFGGAGVGKTVLIQEMINRIARNFGGTSVFAGVGERTREGNDLWVELAEANVLKDTALVFGQMDEPPGTRMRVALSALTMAEWFRDEQGQDVLLFIDNIFRFTQAGSEVSTLLGRMPSAVGYQPTLADEMGELQERITSTRGRSITSMQAVYVPADDYTDPAPATTFAHLDATTELSRAVFSKGIFPAVDPLASSSTILDPSVVGDEHYRVAQEVIRILQRYKDLQDIIAILGIDELSEEDKQLVNRARRIERFLSQNMMAAEQFTGQPGSTVPVKETIEAFDRLCKGDFDHVPEQAFFLIGGLDDLAKKAESLGAKL</sequence>
<gene>
    <name evidence="1" type="primary">atpD</name>
    <name type="ordered locus">MRA_1318</name>
</gene>
<evidence type="ECO:0000255" key="1">
    <source>
        <dbReference type="HAMAP-Rule" id="MF_01347"/>
    </source>
</evidence>
<evidence type="ECO:0000256" key="2">
    <source>
        <dbReference type="SAM" id="MobiDB-lite"/>
    </source>
</evidence>
<name>ATPB_MYCTA</name>
<protein>
    <recommendedName>
        <fullName evidence="1">ATP synthase subunit beta</fullName>
        <ecNumber evidence="1">7.1.2.2</ecNumber>
    </recommendedName>
    <alternativeName>
        <fullName evidence="1">ATP synthase F1 sector subunit beta</fullName>
    </alternativeName>
    <alternativeName>
        <fullName evidence="1">F-ATPase subunit beta</fullName>
    </alternativeName>
</protein>
<proteinExistence type="inferred from homology"/>
<keyword id="KW-0066">ATP synthesis</keyword>
<keyword id="KW-0067">ATP-binding</keyword>
<keyword id="KW-1003">Cell membrane</keyword>
<keyword id="KW-0139">CF(1)</keyword>
<keyword id="KW-0375">Hydrogen ion transport</keyword>
<keyword id="KW-0406">Ion transport</keyword>
<keyword id="KW-0472">Membrane</keyword>
<keyword id="KW-0547">Nucleotide-binding</keyword>
<keyword id="KW-1185">Reference proteome</keyword>
<keyword id="KW-1278">Translocase</keyword>
<keyword id="KW-0813">Transport</keyword>
<feature type="chain" id="PRO_1000055136" description="ATP synthase subunit beta">
    <location>
        <begin position="1"/>
        <end position="486"/>
    </location>
</feature>
<feature type="region of interest" description="Disordered" evidence="2">
    <location>
        <begin position="1"/>
        <end position="22"/>
    </location>
</feature>
<feature type="compositionally biased region" description="Basic and acidic residues" evidence="2">
    <location>
        <begin position="1"/>
        <end position="12"/>
    </location>
</feature>
<feature type="binding site" evidence="1">
    <location>
        <begin position="171"/>
        <end position="178"/>
    </location>
    <ligand>
        <name>ATP</name>
        <dbReference type="ChEBI" id="CHEBI:30616"/>
    </ligand>
</feature>